<reference key="1">
    <citation type="submission" date="2000-05" db="EMBL/GenBank/DDBJ databases">
        <title>Structural analysis of Arabidopsis thaliana chromosome 5. XI.</title>
        <authorList>
            <person name="Kaneko T."/>
            <person name="Katoh T."/>
            <person name="Asamizu E."/>
            <person name="Sato S."/>
            <person name="Nakamura Y."/>
            <person name="Kotani H."/>
            <person name="Tabata S."/>
        </authorList>
    </citation>
    <scope>NUCLEOTIDE SEQUENCE [LARGE SCALE GENOMIC DNA]</scope>
    <source>
        <strain>cv. Columbia</strain>
    </source>
</reference>
<reference key="2">
    <citation type="journal article" date="1999" name="DNA Res.">
        <title>Structural analysis of Arabidopsis thaliana chromosome 5. IX. Sequence features of the regions of 1,011,550 bp covered by seventeen P1 and TAC clones.</title>
        <authorList>
            <person name="Kaneko T."/>
            <person name="Katoh T."/>
            <person name="Sato S."/>
            <person name="Nakamura Y."/>
            <person name="Asamizu E."/>
            <person name="Kotani H."/>
            <person name="Miyajima N."/>
            <person name="Tabata S."/>
        </authorList>
    </citation>
    <scope>NUCLEOTIDE SEQUENCE [LARGE SCALE GENOMIC DNA]</scope>
    <source>
        <strain>cv. Columbia</strain>
    </source>
</reference>
<reference key="3">
    <citation type="journal article" date="2017" name="Plant J.">
        <title>Araport11: a complete reannotation of the Arabidopsis thaliana reference genome.</title>
        <authorList>
            <person name="Cheng C.Y."/>
            <person name="Krishnakumar V."/>
            <person name="Chan A.P."/>
            <person name="Thibaud-Nissen F."/>
            <person name="Schobel S."/>
            <person name="Town C.D."/>
        </authorList>
    </citation>
    <scope>GENOME REANNOTATION</scope>
    <source>
        <strain>cv. Columbia</strain>
    </source>
</reference>
<reference key="4">
    <citation type="submission" date="2005-02" db="EMBL/GenBank/DDBJ databases">
        <title>Arabidopsis ORF clones.</title>
        <authorList>
            <person name="Cheuk R."/>
            <person name="Chen H."/>
            <person name="Kim C.J."/>
            <person name="Shinn P."/>
            <person name="Ecker J.R."/>
        </authorList>
    </citation>
    <scope>NUCLEOTIDE SEQUENCE [LARGE SCALE MRNA]</scope>
</reference>
<reference key="5">
    <citation type="submission" date="2006-07" db="EMBL/GenBank/DDBJ databases">
        <title>Large-scale analysis of RIKEN Arabidopsis full-length (RAFL) cDNAs.</title>
        <authorList>
            <person name="Totoki Y."/>
            <person name="Seki M."/>
            <person name="Ishida J."/>
            <person name="Nakajima M."/>
            <person name="Enju A."/>
            <person name="Kamiya A."/>
            <person name="Narusaka M."/>
            <person name="Shin-i T."/>
            <person name="Nakagawa M."/>
            <person name="Sakamoto N."/>
            <person name="Oishi K."/>
            <person name="Kohara Y."/>
            <person name="Kobayashi M."/>
            <person name="Toyoda A."/>
            <person name="Sakaki Y."/>
            <person name="Sakurai T."/>
            <person name="Iida K."/>
            <person name="Akiyama K."/>
            <person name="Satou M."/>
            <person name="Toyoda T."/>
            <person name="Konagaya A."/>
            <person name="Carninci P."/>
            <person name="Kawai J."/>
            <person name="Hayashizaki Y."/>
            <person name="Shinozaki K."/>
        </authorList>
    </citation>
    <scope>NUCLEOTIDE SEQUENCE [LARGE SCALE MRNA]</scope>
    <source>
        <strain>cv. Columbia</strain>
    </source>
</reference>
<reference key="6">
    <citation type="journal article" date="2007" name="Plant J.">
        <title>The TUMOROUS SHOOT DEVELOPMENT2 gene of Arabidopsis encoding a putative methyltransferase is required for cell adhesion and co-ordinated plant development.</title>
        <authorList>
            <person name="Krupkova E."/>
            <person name="Immerzeel P."/>
            <person name="Pauly M."/>
            <person name="Schmulling T."/>
        </authorList>
    </citation>
    <scope>GENE FAMILY</scope>
</reference>
<sequence length="682" mass="77711">MKLFLNSNLLRNSIFFKISAFVLISVACFFLGKHWSEDGFRRLIFFSAEPSRSPIVALSPDFGKTYNISGLIYESHPILPPSLSPPPPPDSVELKVFGIVNENGTMSDEFQIGDYDVESAETLGNQTEFESSDDDDIKSTTARVSVRKFEICSENMTEYIPCLDNVEAIKRLNSTARGERFERNCPNDGMGLNCTVPIPQGYRSPIPWPRSRDEVWFNNVPHTKLVEDKGGQNWIYKENDKFKFPGGGTQFIHGADQYLDQISQMIPDISFGNHTRVVLDIGCGVASFGAYLMSRNVLTMSIAPKDVHENQIQFALERGVPAMVAAFTTRRLLYPSQAFDLVHCSRCRINWTRDDGILLLEVNRMLRAGGYFVWAAQPVYKHEKALEEQWEEMLNLTTRLCWVLVKKEGYIAIWQKPVNNTCYLSRGAGVSPPLCNSEDDPDNVWYVDLKACITRIEENGYGANLAPWPARLLTPPDRLQTIQIDSYIARKELFVAESKYWKEIISNYVNALHWKQIGLRNVLDMRAGFGGFAAALAELKVDCWVLNVIPVSGPNTLPVIYDRGLLGVMHDWCEPFDTYPRTYDLLHAAGLFSIERKRCNMTTMMLEMDRILRPGGRVYIRDTINVTSELQEIGNAMRWHTSLRETAEGPHSSYRVLLCEKRFESSEKRRTKKRRKTKGKRA</sequence>
<protein>
    <recommendedName>
        <fullName>Probable methyltransferase PMT12</fullName>
        <ecNumber>2.1.1.-</ecNumber>
    </recommendedName>
</protein>
<comment type="subcellular location">
    <subcellularLocation>
        <location evidence="1">Golgi apparatus membrane</location>
        <topology>Single-pass type II membrane protein</topology>
    </subcellularLocation>
</comment>
<comment type="similarity">
    <text evidence="3">Belongs to the methyltransferase superfamily.</text>
</comment>
<proteinExistence type="evidence at transcript level"/>
<dbReference type="EC" id="2.1.1.-"/>
<dbReference type="EMBL" id="AP002030">
    <property type="protein sequence ID" value="BAB10206.1"/>
    <property type="molecule type" value="Genomic_DNA"/>
</dbReference>
<dbReference type="EMBL" id="AB017060">
    <property type="protein sequence ID" value="BAB10206.1"/>
    <property type="status" value="JOINED"/>
    <property type="molecule type" value="Genomic_DNA"/>
</dbReference>
<dbReference type="EMBL" id="CP002688">
    <property type="protein sequence ID" value="AED90959.1"/>
    <property type="molecule type" value="Genomic_DNA"/>
</dbReference>
<dbReference type="EMBL" id="BT015368">
    <property type="protein sequence ID" value="AAU05491.1"/>
    <property type="molecule type" value="mRNA"/>
</dbReference>
<dbReference type="EMBL" id="BT020595">
    <property type="protein sequence ID" value="AAW80868.1"/>
    <property type="molecule type" value="mRNA"/>
</dbReference>
<dbReference type="EMBL" id="AK226215">
    <property type="protein sequence ID" value="BAE98380.1"/>
    <property type="molecule type" value="mRNA"/>
</dbReference>
<dbReference type="RefSeq" id="NP_196224.1">
    <property type="nucleotide sequence ID" value="NM_120687.5"/>
</dbReference>
<dbReference type="FunCoup" id="Q9FG39">
    <property type="interactions" value="408"/>
</dbReference>
<dbReference type="STRING" id="3702.Q9FG39"/>
<dbReference type="GlyGen" id="Q9FG39">
    <property type="glycosylation" value="12 sites"/>
</dbReference>
<dbReference type="PaxDb" id="3702-AT5G06050.1"/>
<dbReference type="ProteomicsDB" id="226188"/>
<dbReference type="EnsemblPlants" id="AT5G06050.1">
    <property type="protein sequence ID" value="AT5G06050.1"/>
    <property type="gene ID" value="AT5G06050"/>
</dbReference>
<dbReference type="GeneID" id="830492"/>
<dbReference type="Gramene" id="AT5G06050.1">
    <property type="protein sequence ID" value="AT5G06050.1"/>
    <property type="gene ID" value="AT5G06050"/>
</dbReference>
<dbReference type="KEGG" id="ath:AT5G06050"/>
<dbReference type="Araport" id="AT5G06050"/>
<dbReference type="TAIR" id="AT5G06050"/>
<dbReference type="eggNOG" id="ENOG502QQFS">
    <property type="taxonomic scope" value="Eukaryota"/>
</dbReference>
<dbReference type="HOGENOM" id="CLU_010485_2_4_1"/>
<dbReference type="InParanoid" id="Q9FG39"/>
<dbReference type="OMA" id="ESRYWHE"/>
<dbReference type="PhylomeDB" id="Q9FG39"/>
<dbReference type="PRO" id="PR:Q9FG39"/>
<dbReference type="Proteomes" id="UP000006548">
    <property type="component" value="Chromosome 5"/>
</dbReference>
<dbReference type="ExpressionAtlas" id="Q9FG39">
    <property type="expression patterns" value="baseline and differential"/>
</dbReference>
<dbReference type="GO" id="GO:0000139">
    <property type="term" value="C:Golgi membrane"/>
    <property type="evidence" value="ECO:0007669"/>
    <property type="project" value="UniProtKB-SubCell"/>
</dbReference>
<dbReference type="GO" id="GO:0008168">
    <property type="term" value="F:methyltransferase activity"/>
    <property type="evidence" value="ECO:0007669"/>
    <property type="project" value="UniProtKB-KW"/>
</dbReference>
<dbReference type="GO" id="GO:0032259">
    <property type="term" value="P:methylation"/>
    <property type="evidence" value="ECO:0007669"/>
    <property type="project" value="UniProtKB-KW"/>
</dbReference>
<dbReference type="FunFam" id="3.40.50.150:FF:000043">
    <property type="entry name" value="probable methyltransferase PMT3"/>
    <property type="match status" value="1"/>
</dbReference>
<dbReference type="Gene3D" id="3.40.50.150">
    <property type="entry name" value="Vaccinia Virus protein VP39"/>
    <property type="match status" value="1"/>
</dbReference>
<dbReference type="InterPro" id="IPR004159">
    <property type="entry name" value="Put_SAM_MeTrfase"/>
</dbReference>
<dbReference type="InterPro" id="IPR029063">
    <property type="entry name" value="SAM-dependent_MTases_sf"/>
</dbReference>
<dbReference type="PANTHER" id="PTHR10108:SF1091">
    <property type="entry name" value="METHYLTRANSFERASE PMT12-RELATED"/>
    <property type="match status" value="1"/>
</dbReference>
<dbReference type="PANTHER" id="PTHR10108">
    <property type="entry name" value="SAM-DEPENDENT METHYLTRANSFERASE"/>
    <property type="match status" value="1"/>
</dbReference>
<dbReference type="Pfam" id="PF03141">
    <property type="entry name" value="Methyltransf_29"/>
    <property type="match status" value="1"/>
</dbReference>
<dbReference type="SUPFAM" id="SSF53335">
    <property type="entry name" value="S-adenosyl-L-methionine-dependent methyltransferases"/>
    <property type="match status" value="2"/>
</dbReference>
<organism>
    <name type="scientific">Arabidopsis thaliana</name>
    <name type="common">Mouse-ear cress</name>
    <dbReference type="NCBI Taxonomy" id="3702"/>
    <lineage>
        <taxon>Eukaryota</taxon>
        <taxon>Viridiplantae</taxon>
        <taxon>Streptophyta</taxon>
        <taxon>Embryophyta</taxon>
        <taxon>Tracheophyta</taxon>
        <taxon>Spermatophyta</taxon>
        <taxon>Magnoliopsida</taxon>
        <taxon>eudicotyledons</taxon>
        <taxon>Gunneridae</taxon>
        <taxon>Pentapetalae</taxon>
        <taxon>rosids</taxon>
        <taxon>malvids</taxon>
        <taxon>Brassicales</taxon>
        <taxon>Brassicaceae</taxon>
        <taxon>Camelineae</taxon>
        <taxon>Arabidopsis</taxon>
    </lineage>
</organism>
<evidence type="ECO:0000250" key="1"/>
<evidence type="ECO:0000255" key="2"/>
<evidence type="ECO:0000305" key="3"/>
<name>PMTC_ARATH</name>
<keyword id="KW-0325">Glycoprotein</keyword>
<keyword id="KW-0333">Golgi apparatus</keyword>
<keyword id="KW-0472">Membrane</keyword>
<keyword id="KW-0489">Methyltransferase</keyword>
<keyword id="KW-1185">Reference proteome</keyword>
<keyword id="KW-0735">Signal-anchor</keyword>
<keyword id="KW-0808">Transferase</keyword>
<keyword id="KW-0812">Transmembrane</keyword>
<keyword id="KW-1133">Transmembrane helix</keyword>
<feature type="chain" id="PRO_0000393252" description="Probable methyltransferase PMT12">
    <location>
        <begin position="1"/>
        <end position="682"/>
    </location>
</feature>
<feature type="topological domain" description="Cytoplasmic" evidence="2">
    <location>
        <begin position="1"/>
        <end position="11"/>
    </location>
</feature>
<feature type="transmembrane region" description="Helical; Signal-anchor for type II membrane protein" evidence="2">
    <location>
        <begin position="12"/>
        <end position="32"/>
    </location>
</feature>
<feature type="topological domain" description="Lumenal" evidence="2">
    <location>
        <begin position="33"/>
        <end position="682"/>
    </location>
</feature>
<feature type="glycosylation site" description="N-linked (GlcNAc...) asparagine" evidence="2">
    <location>
        <position position="67"/>
    </location>
</feature>
<feature type="glycosylation site" description="N-linked (GlcNAc...) asparagine" evidence="2">
    <location>
        <position position="103"/>
    </location>
</feature>
<feature type="glycosylation site" description="N-linked (GlcNAc...) asparagine" evidence="2">
    <location>
        <position position="125"/>
    </location>
</feature>
<feature type="glycosylation site" description="N-linked (GlcNAc...) asparagine" evidence="2">
    <location>
        <position position="155"/>
    </location>
</feature>
<feature type="glycosylation site" description="N-linked (GlcNAc...) asparagine" evidence="2">
    <location>
        <position position="173"/>
    </location>
</feature>
<feature type="glycosylation site" description="N-linked (GlcNAc...) asparagine" evidence="2">
    <location>
        <position position="193"/>
    </location>
</feature>
<feature type="glycosylation site" description="N-linked (GlcNAc...) asparagine" evidence="2">
    <location>
        <position position="273"/>
    </location>
</feature>
<feature type="glycosylation site" description="N-linked (GlcNAc...) asparagine" evidence="2">
    <location>
        <position position="350"/>
    </location>
</feature>
<feature type="glycosylation site" description="N-linked (GlcNAc...) asparagine" evidence="2">
    <location>
        <position position="395"/>
    </location>
</feature>
<feature type="glycosylation site" description="N-linked (GlcNAc...) asparagine" evidence="2">
    <location>
        <position position="419"/>
    </location>
</feature>
<feature type="glycosylation site" description="N-linked (GlcNAc...) asparagine" evidence="2">
    <location>
        <position position="600"/>
    </location>
</feature>
<feature type="glycosylation site" description="N-linked (GlcNAc...) asparagine" evidence="2">
    <location>
        <position position="625"/>
    </location>
</feature>
<accession>Q9FG39</accession>
<gene>
    <name type="ordered locus">At5g06050</name>
    <name type="ORF">K18J17.25</name>
</gene>